<sequence length="22" mass="2298">MGFNGGILEGEEXKAVVTINXP</sequence>
<accession>P81357</accession>
<evidence type="ECO:0000250" key="1">
    <source>
        <dbReference type="UniProtKB" id="P52046"/>
    </source>
</evidence>
<evidence type="ECO:0000305" key="2"/>
<name>CRT_CLOPA</name>
<gene>
    <name type="primary">crt</name>
</gene>
<dbReference type="EC" id="4.2.1.150" evidence="1"/>
<dbReference type="UniPathway" id="UPA00863"/>
<dbReference type="GO" id="GO:0016829">
    <property type="term" value="F:lyase activity"/>
    <property type="evidence" value="ECO:0007669"/>
    <property type="project" value="UniProtKB-KW"/>
</dbReference>
<dbReference type="GO" id="GO:0019605">
    <property type="term" value="P:butyrate metabolic process"/>
    <property type="evidence" value="ECO:0007669"/>
    <property type="project" value="UniProtKB-UniPathway"/>
</dbReference>
<feature type="chain" id="PRO_0000109319" description="Short-chain-enoyl-CoA hydratase">
    <location>
        <begin position="1"/>
        <end position="22" status="greater than"/>
    </location>
</feature>
<feature type="sequence variant">
    <original>N</original>
    <variation>D</variation>
    <location>
        <position position="20"/>
    </location>
</feature>
<feature type="non-terminal residue">
    <location>
        <position position="22"/>
    </location>
</feature>
<comment type="catalytic activity">
    <reaction evidence="1">
        <text>a short-chain (3S)-3-hydroxyacyl-CoA = a short-chain (2E)-enoyl-CoA + H2O</text>
        <dbReference type="Rhea" id="RHEA:52664"/>
        <dbReference type="ChEBI" id="CHEBI:15377"/>
        <dbReference type="ChEBI" id="CHEBI:87488"/>
        <dbReference type="ChEBI" id="CHEBI:136760"/>
        <dbReference type="EC" id="4.2.1.150"/>
    </reaction>
</comment>
<comment type="pathway">
    <text>Lipid metabolism; butanoate metabolism.</text>
</comment>
<comment type="miscellaneous">
    <text>On the 2D-gel the determined pI of this unknown protein is 5.2, its MW is 30.9 kDa.</text>
</comment>
<comment type="similarity">
    <text evidence="2">Belongs to the enoyl-CoA hydratase/isomerase family.</text>
</comment>
<protein>
    <recommendedName>
        <fullName evidence="1">Short-chain-enoyl-CoA hydratase</fullName>
        <ecNumber evidence="1">4.2.1.150</ecNumber>
    </recommendedName>
    <alternativeName>
        <fullName evidence="1">3-hydroxybutyryl-CoA dehydratase</fullName>
    </alternativeName>
    <alternativeName>
        <fullName>CP 24</fullName>
    </alternativeName>
    <alternativeName>
        <fullName evidence="1">Crotonase</fullName>
    </alternativeName>
</protein>
<keyword id="KW-0903">Direct protein sequencing</keyword>
<keyword id="KW-0276">Fatty acid metabolism</keyword>
<keyword id="KW-0443">Lipid metabolism</keyword>
<keyword id="KW-0456">Lyase</keyword>
<reference key="1">
    <citation type="journal article" date="1998" name="Electrophoresis">
        <title>Two-dimensional gel electrophoresis separation and N-terminal sequence analysis of proteins from Clostridium pasteurianum W5.</title>
        <authorList>
            <person name="Flengsrud R."/>
            <person name="Skjeldal L."/>
        </authorList>
    </citation>
    <scope>PROTEIN SEQUENCE</scope>
    <source>
        <strain>ATCC 6013 / DSM 525 / NCIB 9486 / VKM B-1774 / W5</strain>
    </source>
</reference>
<organism>
    <name type="scientific">Clostridium pasteurianum</name>
    <dbReference type="NCBI Taxonomy" id="1501"/>
    <lineage>
        <taxon>Bacteria</taxon>
        <taxon>Bacillati</taxon>
        <taxon>Bacillota</taxon>
        <taxon>Clostridia</taxon>
        <taxon>Eubacteriales</taxon>
        <taxon>Clostridiaceae</taxon>
        <taxon>Clostridium</taxon>
    </lineage>
</organism>
<proteinExistence type="evidence at protein level"/>